<protein>
    <recommendedName>
        <fullName>Mitotic-spindle organizing protein 2A</fullName>
    </recommendedName>
    <alternativeName>
        <fullName>Mitotic-spindle organizing protein associated with a ring of gamma-tubulin 2A</fullName>
    </alternativeName>
</protein>
<dbReference type="EMBL" id="AC073869">
    <property type="protein sequence ID" value="AAX93252.1"/>
    <property type="status" value="ALT_INIT"/>
    <property type="molecule type" value="Genomic_DNA"/>
</dbReference>
<dbReference type="EMBL" id="BC018206">
    <property type="protein sequence ID" value="AAH18206.2"/>
    <property type="molecule type" value="mRNA"/>
</dbReference>
<dbReference type="EMBL" id="BC063024">
    <property type="protein sequence ID" value="AAH63024.1"/>
    <property type="molecule type" value="mRNA"/>
</dbReference>
<dbReference type="EMBL" id="BC104650">
    <property type="protein sequence ID" value="AAI04651.1"/>
    <property type="molecule type" value="mRNA"/>
</dbReference>
<dbReference type="CCDS" id="CCDS42758.1"/>
<dbReference type="RefSeq" id="NP_001078834.1">
    <property type="nucleotide sequence ID" value="NM_001085365.2"/>
</dbReference>
<dbReference type="PDB" id="6X0V">
    <property type="method" value="EM"/>
    <property type="resolution" value="4.50 A"/>
    <property type="chains" value="E=1-158"/>
</dbReference>
<dbReference type="PDB" id="8RX1">
    <property type="method" value="EM"/>
    <property type="resolution" value="3.57 A"/>
    <property type="chains" value="e=1-158"/>
</dbReference>
<dbReference type="PDB" id="9H9P">
    <property type="method" value="EM"/>
    <property type="resolution" value="4.50 A"/>
    <property type="chains" value="C=1-158"/>
</dbReference>
<dbReference type="PDBsum" id="6X0V"/>
<dbReference type="PDBsum" id="8RX1"/>
<dbReference type="PDBsum" id="9H9P"/>
<dbReference type="EMDB" id="EMD-19570"/>
<dbReference type="EMDB" id="EMD-21985"/>
<dbReference type="SMR" id="Q6P582"/>
<dbReference type="BioGRID" id="576069">
    <property type="interactions" value="34"/>
</dbReference>
<dbReference type="FunCoup" id="Q6P582">
    <property type="interactions" value="863"/>
</dbReference>
<dbReference type="IntAct" id="Q6P582">
    <property type="interactions" value="35"/>
</dbReference>
<dbReference type="STRING" id="9606.ENSP00000311500"/>
<dbReference type="GlyGen" id="Q6P582">
    <property type="glycosylation" value="1 site, 1 O-linked glycan (1 site)"/>
</dbReference>
<dbReference type="iPTMnet" id="Q6P582"/>
<dbReference type="PhosphoSitePlus" id="Q6P582"/>
<dbReference type="BioMuta" id="MZT2A"/>
<dbReference type="DMDM" id="190359337"/>
<dbReference type="jPOST" id="Q6P582"/>
<dbReference type="MassIVE" id="Q6P582"/>
<dbReference type="PaxDb" id="9606-ENSP00000311500"/>
<dbReference type="PeptideAtlas" id="Q6P582"/>
<dbReference type="ProteomicsDB" id="66991"/>
<dbReference type="Pumba" id="Q6P582"/>
<dbReference type="Antibodypedia" id="71848">
    <property type="antibodies" value="4 antibodies from 4 providers"/>
</dbReference>
<dbReference type="DNASU" id="653784"/>
<dbReference type="Ensembl" id="ENST00000309451.7">
    <property type="protein sequence ID" value="ENSP00000311500.6"/>
    <property type="gene ID" value="ENSG00000173272.16"/>
</dbReference>
<dbReference type="GeneID" id="653784"/>
<dbReference type="KEGG" id="hsa:653784"/>
<dbReference type="MANE-Select" id="ENST00000309451.7">
    <property type="protein sequence ID" value="ENSP00000311500.6"/>
    <property type="RefSeq nucleotide sequence ID" value="NM_001085365.2"/>
    <property type="RefSeq protein sequence ID" value="NP_001078834.1"/>
</dbReference>
<dbReference type="UCSC" id="uc002tsw.5">
    <property type="organism name" value="human"/>
</dbReference>
<dbReference type="AGR" id="HGNC:33187"/>
<dbReference type="CTD" id="653784"/>
<dbReference type="DisGeNET" id="653784"/>
<dbReference type="GeneCards" id="MZT2A"/>
<dbReference type="HGNC" id="HGNC:33187">
    <property type="gene designation" value="MZT2A"/>
</dbReference>
<dbReference type="HPA" id="ENSG00000173272">
    <property type="expression patterns" value="Tissue enhanced (heart)"/>
</dbReference>
<dbReference type="MalaCards" id="MZT2A"/>
<dbReference type="MIM" id="613449">
    <property type="type" value="gene"/>
</dbReference>
<dbReference type="neXtProt" id="NX_Q6P582"/>
<dbReference type="OpenTargets" id="ENSG00000173272"/>
<dbReference type="PharmGKB" id="PA165696923"/>
<dbReference type="VEuPathDB" id="HostDB:ENSG00000173272"/>
<dbReference type="eggNOG" id="ENOG502S50R">
    <property type="taxonomic scope" value="Eukaryota"/>
</dbReference>
<dbReference type="GeneTree" id="ENSGT00390000014845"/>
<dbReference type="HOGENOM" id="CLU_105461_0_0_1"/>
<dbReference type="InParanoid" id="Q6P582"/>
<dbReference type="OMA" id="MCAGQRA"/>
<dbReference type="OrthoDB" id="10064769at2759"/>
<dbReference type="PAN-GO" id="Q6P582">
    <property type="GO annotations" value="2 GO annotations based on evolutionary models"/>
</dbReference>
<dbReference type="PhylomeDB" id="Q6P582"/>
<dbReference type="TreeFam" id="TF333013"/>
<dbReference type="PathwayCommons" id="Q6P582"/>
<dbReference type="Reactome" id="R-HSA-380270">
    <property type="pathway name" value="Recruitment of mitotic centrosome proteins and complexes"/>
</dbReference>
<dbReference type="Reactome" id="R-HSA-380320">
    <property type="pathway name" value="Recruitment of NuMA to mitotic centrosomes"/>
</dbReference>
<dbReference type="SignaLink" id="Q6P582"/>
<dbReference type="BioGRID-ORCS" id="653784">
    <property type="hits" value="41 hits in 1057 CRISPR screens"/>
</dbReference>
<dbReference type="ChiTaRS" id="MZT2A">
    <property type="organism name" value="human"/>
</dbReference>
<dbReference type="GenomeRNAi" id="653784"/>
<dbReference type="Pharos" id="Q6P582">
    <property type="development level" value="Tdark"/>
</dbReference>
<dbReference type="PRO" id="PR:Q6P582"/>
<dbReference type="Proteomes" id="UP000005640">
    <property type="component" value="Chromosome 2"/>
</dbReference>
<dbReference type="RNAct" id="Q6P582">
    <property type="molecule type" value="protein"/>
</dbReference>
<dbReference type="Bgee" id="ENSG00000173272">
    <property type="expression patterns" value="Expressed in parotid gland and 201 other cell types or tissues"/>
</dbReference>
<dbReference type="ExpressionAtlas" id="Q6P582">
    <property type="expression patterns" value="baseline and differential"/>
</dbReference>
<dbReference type="GO" id="GO:0005813">
    <property type="term" value="C:centrosome"/>
    <property type="evidence" value="ECO:0000314"/>
    <property type="project" value="UniProtKB"/>
</dbReference>
<dbReference type="GO" id="GO:0005829">
    <property type="term" value="C:cytosol"/>
    <property type="evidence" value="ECO:0000314"/>
    <property type="project" value="HPA"/>
</dbReference>
<dbReference type="GO" id="GO:0000931">
    <property type="term" value="C:gamma-tubulin ring complex"/>
    <property type="evidence" value="ECO:0000250"/>
    <property type="project" value="UniProtKB"/>
</dbReference>
<dbReference type="GO" id="GO:0005654">
    <property type="term" value="C:nucleoplasm"/>
    <property type="evidence" value="ECO:0000314"/>
    <property type="project" value="HPA"/>
</dbReference>
<dbReference type="GO" id="GO:0005819">
    <property type="term" value="C:spindle"/>
    <property type="evidence" value="ECO:0000250"/>
    <property type="project" value="UniProtKB"/>
</dbReference>
<dbReference type="InterPro" id="IPR024332">
    <property type="entry name" value="MOZART2"/>
</dbReference>
<dbReference type="PANTHER" id="PTHR28578:SF3">
    <property type="entry name" value="MITOTIC-SPINDLE ORGANIZING PROTEIN 2A"/>
    <property type="match status" value="1"/>
</dbReference>
<dbReference type="PANTHER" id="PTHR28578">
    <property type="entry name" value="MITOTIC-SPINDLE ORGANIZING PROTEIN 2A-RELATED"/>
    <property type="match status" value="1"/>
</dbReference>
<dbReference type="Pfam" id="PF12926">
    <property type="entry name" value="MOZART2"/>
    <property type="match status" value="1"/>
</dbReference>
<name>MZT2A_HUMAN</name>
<keyword id="KW-0002">3D-structure</keyword>
<keyword id="KW-0963">Cytoplasm</keyword>
<keyword id="KW-0206">Cytoskeleton</keyword>
<keyword id="KW-0597">Phosphoprotein</keyword>
<keyword id="KW-1267">Proteomics identification</keyword>
<keyword id="KW-1185">Reference proteome</keyword>
<organism>
    <name type="scientific">Homo sapiens</name>
    <name type="common">Human</name>
    <dbReference type="NCBI Taxonomy" id="9606"/>
    <lineage>
        <taxon>Eukaryota</taxon>
        <taxon>Metazoa</taxon>
        <taxon>Chordata</taxon>
        <taxon>Craniata</taxon>
        <taxon>Vertebrata</taxon>
        <taxon>Euteleostomi</taxon>
        <taxon>Mammalia</taxon>
        <taxon>Eutheria</taxon>
        <taxon>Euarchontoglires</taxon>
        <taxon>Primates</taxon>
        <taxon>Haplorrhini</taxon>
        <taxon>Catarrhini</taxon>
        <taxon>Hominidae</taxon>
        <taxon>Homo</taxon>
    </lineage>
</organism>
<comment type="function">
    <text evidence="3 4">Required for the recruitment and the assembly of the gamma-tubulin ring complex (gTuRC) at the centrosome (PubMed:20360068, PubMed:39321809). The gTuRC regulates the minus-end nucleation of alpha-beta tubulin heterodimers that grow into microtubule protafilaments, a critical step in centrosome duplication and spindle formation (PubMed:39321809).</text>
</comment>
<comment type="subunit">
    <text evidence="3 4">Associates with the gamma-tubulin ring complex (gTuRC) consisting of TUBGCP2, TUBGCP3, TUBGCP4, TUBGCP5 and TUBGCP6 and gamma-tubulin TUBG1 or TUBG2; within the complex, interacts with TUBGCP2; the interaction plays a role in gTuRC activation.</text>
</comment>
<comment type="interaction">
    <interactant intactId="EBI-2558548">
        <id>Q6P582</id>
    </interactant>
    <interactant intactId="EBI-353779">
        <id>O00571</id>
        <label>DDX3X</label>
    </interactant>
    <organismsDiffer>false</organismsDiffer>
    <experiments>3</experiments>
</comment>
<comment type="subcellular location">
    <subcellularLocation>
        <location evidence="1">Cytoplasm</location>
        <location evidence="1">Cytoskeleton</location>
        <location evidence="1">Microtubule organizing center</location>
        <location evidence="1">Centrosome</location>
    </subcellularLocation>
    <subcellularLocation>
        <location evidence="1">Cytoplasm</location>
        <location evidence="1">Cytoskeleton</location>
        <location evidence="1">Spindle</location>
    </subcellularLocation>
</comment>
<comment type="similarity">
    <text evidence="5">Belongs to the MOZART2 family.</text>
</comment>
<comment type="sequence caution" evidence="5">
    <conflict type="erroneous initiation">
        <sequence resource="EMBL-CDS" id="AAX93252"/>
    </conflict>
    <text>Truncated N-terminus.</text>
</comment>
<accession>Q6P582</accession>
<accession>Q3SWV8</accession>
<accession>Q8WVB2</accession>
<proteinExistence type="evidence at protein level"/>
<evidence type="ECO:0000250" key="1">
    <source>
        <dbReference type="UniProtKB" id="Q6NZ67"/>
    </source>
</evidence>
<evidence type="ECO:0000256" key="2">
    <source>
        <dbReference type="SAM" id="MobiDB-lite"/>
    </source>
</evidence>
<evidence type="ECO:0000269" key="3">
    <source>
    </source>
</evidence>
<evidence type="ECO:0000269" key="4">
    <source>
    </source>
</evidence>
<evidence type="ECO:0000305" key="5"/>
<evidence type="ECO:0007744" key="6">
    <source>
        <dbReference type="PDB" id="8RX1"/>
    </source>
</evidence>
<reference key="1">
    <citation type="journal article" date="2005" name="Nature">
        <title>Generation and annotation of the DNA sequences of human chromosomes 2 and 4.</title>
        <authorList>
            <person name="Hillier L.W."/>
            <person name="Graves T.A."/>
            <person name="Fulton R.S."/>
            <person name="Fulton L.A."/>
            <person name="Pepin K.H."/>
            <person name="Minx P."/>
            <person name="Wagner-McPherson C."/>
            <person name="Layman D."/>
            <person name="Wylie K."/>
            <person name="Sekhon M."/>
            <person name="Becker M.C."/>
            <person name="Fewell G.A."/>
            <person name="Delehaunty K.D."/>
            <person name="Miner T.L."/>
            <person name="Nash W.E."/>
            <person name="Kremitzki C."/>
            <person name="Oddy L."/>
            <person name="Du H."/>
            <person name="Sun H."/>
            <person name="Bradshaw-Cordum H."/>
            <person name="Ali J."/>
            <person name="Carter J."/>
            <person name="Cordes M."/>
            <person name="Harris A."/>
            <person name="Isak A."/>
            <person name="van Brunt A."/>
            <person name="Nguyen C."/>
            <person name="Du F."/>
            <person name="Courtney L."/>
            <person name="Kalicki J."/>
            <person name="Ozersky P."/>
            <person name="Abbott S."/>
            <person name="Armstrong J."/>
            <person name="Belter E.A."/>
            <person name="Caruso L."/>
            <person name="Cedroni M."/>
            <person name="Cotton M."/>
            <person name="Davidson T."/>
            <person name="Desai A."/>
            <person name="Elliott G."/>
            <person name="Erb T."/>
            <person name="Fronick C."/>
            <person name="Gaige T."/>
            <person name="Haakenson W."/>
            <person name="Haglund K."/>
            <person name="Holmes A."/>
            <person name="Harkins R."/>
            <person name="Kim K."/>
            <person name="Kruchowski S.S."/>
            <person name="Strong C.M."/>
            <person name="Grewal N."/>
            <person name="Goyea E."/>
            <person name="Hou S."/>
            <person name="Levy A."/>
            <person name="Martinka S."/>
            <person name="Mead K."/>
            <person name="McLellan M.D."/>
            <person name="Meyer R."/>
            <person name="Randall-Maher J."/>
            <person name="Tomlinson C."/>
            <person name="Dauphin-Kohlberg S."/>
            <person name="Kozlowicz-Reilly A."/>
            <person name="Shah N."/>
            <person name="Swearengen-Shahid S."/>
            <person name="Snider J."/>
            <person name="Strong J.T."/>
            <person name="Thompson J."/>
            <person name="Yoakum M."/>
            <person name="Leonard S."/>
            <person name="Pearman C."/>
            <person name="Trani L."/>
            <person name="Radionenko M."/>
            <person name="Waligorski J.E."/>
            <person name="Wang C."/>
            <person name="Rock S.M."/>
            <person name="Tin-Wollam A.-M."/>
            <person name="Maupin R."/>
            <person name="Latreille P."/>
            <person name="Wendl M.C."/>
            <person name="Yang S.-P."/>
            <person name="Pohl C."/>
            <person name="Wallis J.W."/>
            <person name="Spieth J."/>
            <person name="Bieri T.A."/>
            <person name="Berkowicz N."/>
            <person name="Nelson J.O."/>
            <person name="Osborne J."/>
            <person name="Ding L."/>
            <person name="Meyer R."/>
            <person name="Sabo A."/>
            <person name="Shotland Y."/>
            <person name="Sinha P."/>
            <person name="Wohldmann P.E."/>
            <person name="Cook L.L."/>
            <person name="Hickenbotham M.T."/>
            <person name="Eldred J."/>
            <person name="Williams D."/>
            <person name="Jones T.A."/>
            <person name="She X."/>
            <person name="Ciccarelli F.D."/>
            <person name="Izaurralde E."/>
            <person name="Taylor J."/>
            <person name="Schmutz J."/>
            <person name="Myers R.M."/>
            <person name="Cox D.R."/>
            <person name="Huang X."/>
            <person name="McPherson J.D."/>
            <person name="Mardis E.R."/>
            <person name="Clifton S.W."/>
            <person name="Warren W.C."/>
            <person name="Chinwalla A.T."/>
            <person name="Eddy S.R."/>
            <person name="Marra M.A."/>
            <person name="Ovcharenko I."/>
            <person name="Furey T.S."/>
            <person name="Miller W."/>
            <person name="Eichler E.E."/>
            <person name="Bork P."/>
            <person name="Suyama M."/>
            <person name="Torrents D."/>
            <person name="Waterston R.H."/>
            <person name="Wilson R.K."/>
        </authorList>
    </citation>
    <scope>NUCLEOTIDE SEQUENCE [LARGE SCALE GENOMIC DNA]</scope>
</reference>
<reference key="2">
    <citation type="journal article" date="2004" name="Genome Res.">
        <title>The status, quality, and expansion of the NIH full-length cDNA project: the Mammalian Gene Collection (MGC).</title>
        <authorList>
            <consortium name="The MGC Project Team"/>
        </authorList>
    </citation>
    <scope>NUCLEOTIDE SEQUENCE [LARGE SCALE MRNA]</scope>
    <source>
        <tissue>Ovary</tissue>
        <tissue>Pancreas</tissue>
    </source>
</reference>
<reference key="3">
    <citation type="journal article" date="2010" name="Science">
        <title>Systematic analysis of human protein complexes identifies chromosome segregation proteins.</title>
        <authorList>
            <person name="Hutchins J.R."/>
            <person name="Toyoda Y."/>
            <person name="Hegemann B."/>
            <person name="Poser I."/>
            <person name="Heriche J.K."/>
            <person name="Sykora M.M."/>
            <person name="Augsburg M."/>
            <person name="Hudecz O."/>
            <person name="Buschhorn B.A."/>
            <person name="Bulkescher J."/>
            <person name="Conrad C."/>
            <person name="Comartin D."/>
            <person name="Schleiffer A."/>
            <person name="Sarov M."/>
            <person name="Pozniakovsky A."/>
            <person name="Slabicki M.M."/>
            <person name="Schloissnig S."/>
            <person name="Steinmacher I."/>
            <person name="Leuschner M."/>
            <person name="Ssykor A."/>
            <person name="Lawo S."/>
            <person name="Pelletier L."/>
            <person name="Stark H."/>
            <person name="Nasmyth K."/>
            <person name="Ellenberg J."/>
            <person name="Durbin R."/>
            <person name="Buchholz F."/>
            <person name="Mechtler K."/>
            <person name="Hyman A.A."/>
            <person name="Peters J.M."/>
        </authorList>
    </citation>
    <scope>INTERACTION WITH THE GAMMA-TUBULIN RING COMPLEX</scope>
</reference>
<reference evidence="6" key="4">
    <citation type="journal article" date="2024" name="Dev. Cell">
        <title>CDK5RAP2 activates microtubule nucleator gammaTuRC by facilitating template formation and actin release.</title>
        <authorList>
            <person name="Serna M."/>
            <person name="Zimmermann F."/>
            <person name="Vineethakumari C."/>
            <person name="Gonzalez-Rodriguez N."/>
            <person name="Llorca O."/>
            <person name="Luders J."/>
        </authorList>
    </citation>
    <scope>STRUCTURE BY ELECTRON MICROSCOPY (3.57 ANGSTROMS) IN COMPLEX WITH MZT1; CDK5RAP2; ACTB AND THE GAMMA-TUBULIN RING COMPLEX</scope>
    <scope>FUNCTION</scope>
    <scope>SUBUNIT</scope>
</reference>
<sequence length="158" mass="16221">MAAQGVGPGPGSAAPPGLEAARQKLALRRKKVLSTEEMELYELAQAAGGGIDPDVFKILVDLLKLNVAPLAVFQMLKSMCAGQRLASEPQDPAAVSLPTSSVPETRGRDKGSAALGGVLALAERSNHEGSSQRMPRQPSATRLPKGGGPGKSPTQGST</sequence>
<feature type="chain" id="PRO_0000338987" description="Mitotic-spindle organizing protein 2A">
    <location>
        <begin position="1"/>
        <end position="158"/>
    </location>
</feature>
<feature type="region of interest" description="Disordered" evidence="2">
    <location>
        <begin position="84"/>
        <end position="158"/>
    </location>
</feature>
<feature type="compositionally biased region" description="Low complexity" evidence="2">
    <location>
        <begin position="112"/>
        <end position="122"/>
    </location>
</feature>
<feature type="compositionally biased region" description="Polar residues" evidence="2">
    <location>
        <begin position="128"/>
        <end position="140"/>
    </location>
</feature>
<feature type="modified residue" description="Phosphoserine" evidence="1">
    <location>
        <position position="34"/>
    </location>
</feature>
<feature type="modified residue" description="Phosphoserine" evidence="1">
    <location>
        <position position="152"/>
    </location>
</feature>
<feature type="sequence conflict" description="In Ref. 2; AAI04651." evidence="5" ref="2">
    <original>EEMELYELAQAAGGGIDPDVFK</original>
    <variation>LQGGGRAGRRGLTGPASVPAR</variation>
    <location>
        <begin position="36"/>
        <end position="57"/>
    </location>
</feature>
<gene>
    <name type="primary">MZT2A</name>
    <name type="synonym">FAM128A</name>
    <name type="synonym">MOZART2A</name>
</gene>